<feature type="chain" id="PRO_1000203589" description="Phosphoserine aminotransferase">
    <location>
        <begin position="1"/>
        <end position="361"/>
    </location>
</feature>
<feature type="binding site" evidence="1">
    <location>
        <position position="42"/>
    </location>
    <ligand>
        <name>L-glutamate</name>
        <dbReference type="ChEBI" id="CHEBI:29985"/>
    </ligand>
</feature>
<feature type="binding site" evidence="1">
    <location>
        <begin position="76"/>
        <end position="77"/>
    </location>
    <ligand>
        <name>pyridoxal 5'-phosphate</name>
        <dbReference type="ChEBI" id="CHEBI:597326"/>
    </ligand>
</feature>
<feature type="binding site" evidence="1">
    <location>
        <position position="102"/>
    </location>
    <ligand>
        <name>pyridoxal 5'-phosphate</name>
        <dbReference type="ChEBI" id="CHEBI:597326"/>
    </ligand>
</feature>
<feature type="binding site" evidence="1">
    <location>
        <position position="153"/>
    </location>
    <ligand>
        <name>pyridoxal 5'-phosphate</name>
        <dbReference type="ChEBI" id="CHEBI:597326"/>
    </ligand>
</feature>
<feature type="binding site" evidence="1">
    <location>
        <position position="173"/>
    </location>
    <ligand>
        <name>pyridoxal 5'-phosphate</name>
        <dbReference type="ChEBI" id="CHEBI:597326"/>
    </ligand>
</feature>
<feature type="binding site" evidence="1">
    <location>
        <position position="196"/>
    </location>
    <ligand>
        <name>pyridoxal 5'-phosphate</name>
        <dbReference type="ChEBI" id="CHEBI:597326"/>
    </ligand>
</feature>
<feature type="binding site" evidence="1">
    <location>
        <begin position="238"/>
        <end position="239"/>
    </location>
    <ligand>
        <name>pyridoxal 5'-phosphate</name>
        <dbReference type="ChEBI" id="CHEBI:597326"/>
    </ligand>
</feature>
<feature type="modified residue" description="N6-(pyridoxal phosphate)lysine" evidence="1">
    <location>
        <position position="197"/>
    </location>
</feature>
<reference key="1">
    <citation type="submission" date="2007-02" db="EMBL/GenBank/DDBJ databases">
        <title>Complete sequence of chromosome of Yersinia pestis Pestoides F.</title>
        <authorList>
            <consortium name="US DOE Joint Genome Institute"/>
            <person name="Copeland A."/>
            <person name="Lucas S."/>
            <person name="Lapidus A."/>
            <person name="Barry K."/>
            <person name="Detter J.C."/>
            <person name="Glavina del Rio T."/>
            <person name="Hammon N."/>
            <person name="Israni S."/>
            <person name="Dalin E."/>
            <person name="Tice H."/>
            <person name="Pitluck S."/>
            <person name="Di Bartolo G."/>
            <person name="Chain P."/>
            <person name="Malfatti S."/>
            <person name="Shin M."/>
            <person name="Vergez L."/>
            <person name="Schmutz J."/>
            <person name="Larimer F."/>
            <person name="Land M."/>
            <person name="Hauser L."/>
            <person name="Worsham P."/>
            <person name="Chu M."/>
            <person name="Bearden S."/>
            <person name="Garcia E."/>
            <person name="Richardson P."/>
        </authorList>
    </citation>
    <scope>NUCLEOTIDE SEQUENCE [LARGE SCALE GENOMIC DNA]</scope>
    <source>
        <strain>Pestoides F</strain>
    </source>
</reference>
<comment type="function">
    <text evidence="1">Catalyzes the reversible conversion of 3-phosphohydroxypyruvate to phosphoserine and of 3-hydroxy-2-oxo-4-phosphonooxybutanoate to phosphohydroxythreonine.</text>
</comment>
<comment type="catalytic activity">
    <reaction evidence="1">
        <text>O-phospho-L-serine + 2-oxoglutarate = 3-phosphooxypyruvate + L-glutamate</text>
        <dbReference type="Rhea" id="RHEA:14329"/>
        <dbReference type="ChEBI" id="CHEBI:16810"/>
        <dbReference type="ChEBI" id="CHEBI:18110"/>
        <dbReference type="ChEBI" id="CHEBI:29985"/>
        <dbReference type="ChEBI" id="CHEBI:57524"/>
        <dbReference type="EC" id="2.6.1.52"/>
    </reaction>
</comment>
<comment type="catalytic activity">
    <reaction evidence="1">
        <text>4-(phosphooxy)-L-threonine + 2-oxoglutarate = (R)-3-hydroxy-2-oxo-4-phosphooxybutanoate + L-glutamate</text>
        <dbReference type="Rhea" id="RHEA:16573"/>
        <dbReference type="ChEBI" id="CHEBI:16810"/>
        <dbReference type="ChEBI" id="CHEBI:29985"/>
        <dbReference type="ChEBI" id="CHEBI:58452"/>
        <dbReference type="ChEBI" id="CHEBI:58538"/>
        <dbReference type="EC" id="2.6.1.52"/>
    </reaction>
</comment>
<comment type="cofactor">
    <cofactor evidence="1">
        <name>pyridoxal 5'-phosphate</name>
        <dbReference type="ChEBI" id="CHEBI:597326"/>
    </cofactor>
    <text evidence="1">Binds 1 pyridoxal phosphate per subunit.</text>
</comment>
<comment type="pathway">
    <text evidence="1">Amino-acid biosynthesis; L-serine biosynthesis; L-serine from 3-phospho-D-glycerate: step 2/3.</text>
</comment>
<comment type="pathway">
    <text evidence="1">Cofactor biosynthesis; pyridoxine 5'-phosphate biosynthesis; pyridoxine 5'-phosphate from D-erythrose 4-phosphate: step 3/5.</text>
</comment>
<comment type="subunit">
    <text evidence="1">Homodimer.</text>
</comment>
<comment type="subcellular location">
    <subcellularLocation>
        <location evidence="1">Cytoplasm</location>
    </subcellularLocation>
</comment>
<comment type="similarity">
    <text evidence="1">Belongs to the class-V pyridoxal-phosphate-dependent aminotransferase family. SerC subfamily.</text>
</comment>
<accession>A4TN19</accession>
<keyword id="KW-0028">Amino-acid biosynthesis</keyword>
<keyword id="KW-0032">Aminotransferase</keyword>
<keyword id="KW-0963">Cytoplasm</keyword>
<keyword id="KW-0663">Pyridoxal phosphate</keyword>
<keyword id="KW-0664">Pyridoxine biosynthesis</keyword>
<keyword id="KW-0718">Serine biosynthesis</keyword>
<keyword id="KW-0808">Transferase</keyword>
<organism>
    <name type="scientific">Yersinia pestis (strain Pestoides F)</name>
    <dbReference type="NCBI Taxonomy" id="386656"/>
    <lineage>
        <taxon>Bacteria</taxon>
        <taxon>Pseudomonadati</taxon>
        <taxon>Pseudomonadota</taxon>
        <taxon>Gammaproteobacteria</taxon>
        <taxon>Enterobacterales</taxon>
        <taxon>Yersiniaceae</taxon>
        <taxon>Yersinia</taxon>
    </lineage>
</organism>
<protein>
    <recommendedName>
        <fullName evidence="1">Phosphoserine aminotransferase</fullName>
        <ecNumber evidence="1">2.6.1.52</ecNumber>
    </recommendedName>
    <alternativeName>
        <fullName evidence="1">Phosphohydroxythreonine aminotransferase</fullName>
        <shortName evidence="1">PSAT</shortName>
    </alternativeName>
</protein>
<name>SERC_YERPP</name>
<dbReference type="EC" id="2.6.1.52" evidence="1"/>
<dbReference type="EMBL" id="CP000668">
    <property type="protein sequence ID" value="ABP40681.1"/>
    <property type="molecule type" value="Genomic_DNA"/>
</dbReference>
<dbReference type="RefSeq" id="WP_011906339.1">
    <property type="nucleotide sequence ID" value="NZ_CP009715.1"/>
</dbReference>
<dbReference type="SMR" id="A4TN19"/>
<dbReference type="KEGG" id="ypp:YPDSF_2306"/>
<dbReference type="PATRIC" id="fig|386656.14.peg.3800"/>
<dbReference type="UniPathway" id="UPA00135">
    <property type="reaction ID" value="UER00197"/>
</dbReference>
<dbReference type="UniPathway" id="UPA00244">
    <property type="reaction ID" value="UER00311"/>
</dbReference>
<dbReference type="GO" id="GO:0005737">
    <property type="term" value="C:cytoplasm"/>
    <property type="evidence" value="ECO:0007669"/>
    <property type="project" value="UniProtKB-SubCell"/>
</dbReference>
<dbReference type="GO" id="GO:0004648">
    <property type="term" value="F:O-phospho-L-serine:2-oxoglutarate aminotransferase activity"/>
    <property type="evidence" value="ECO:0007669"/>
    <property type="project" value="UniProtKB-UniRule"/>
</dbReference>
<dbReference type="GO" id="GO:0030170">
    <property type="term" value="F:pyridoxal phosphate binding"/>
    <property type="evidence" value="ECO:0007669"/>
    <property type="project" value="UniProtKB-UniRule"/>
</dbReference>
<dbReference type="GO" id="GO:0006564">
    <property type="term" value="P:L-serine biosynthetic process"/>
    <property type="evidence" value="ECO:0007669"/>
    <property type="project" value="UniProtKB-UniRule"/>
</dbReference>
<dbReference type="GO" id="GO:0008615">
    <property type="term" value="P:pyridoxine biosynthetic process"/>
    <property type="evidence" value="ECO:0007669"/>
    <property type="project" value="UniProtKB-UniRule"/>
</dbReference>
<dbReference type="CDD" id="cd00611">
    <property type="entry name" value="PSAT_like"/>
    <property type="match status" value="1"/>
</dbReference>
<dbReference type="FunFam" id="3.40.640.10:FF:000010">
    <property type="entry name" value="Phosphoserine aminotransferase"/>
    <property type="match status" value="1"/>
</dbReference>
<dbReference type="FunFam" id="3.90.1150.10:FF:000006">
    <property type="entry name" value="Phosphoserine aminotransferase"/>
    <property type="match status" value="1"/>
</dbReference>
<dbReference type="Gene3D" id="3.90.1150.10">
    <property type="entry name" value="Aspartate Aminotransferase, domain 1"/>
    <property type="match status" value="1"/>
</dbReference>
<dbReference type="Gene3D" id="3.40.640.10">
    <property type="entry name" value="Type I PLP-dependent aspartate aminotransferase-like (Major domain)"/>
    <property type="match status" value="1"/>
</dbReference>
<dbReference type="HAMAP" id="MF_00160">
    <property type="entry name" value="SerC_aminotrans_5"/>
    <property type="match status" value="1"/>
</dbReference>
<dbReference type="InterPro" id="IPR000192">
    <property type="entry name" value="Aminotrans_V_dom"/>
</dbReference>
<dbReference type="InterPro" id="IPR020578">
    <property type="entry name" value="Aminotrans_V_PyrdxlP_BS"/>
</dbReference>
<dbReference type="InterPro" id="IPR022278">
    <property type="entry name" value="Pser_aminoTfrase"/>
</dbReference>
<dbReference type="InterPro" id="IPR015424">
    <property type="entry name" value="PyrdxlP-dep_Trfase"/>
</dbReference>
<dbReference type="InterPro" id="IPR015421">
    <property type="entry name" value="PyrdxlP-dep_Trfase_major"/>
</dbReference>
<dbReference type="InterPro" id="IPR015422">
    <property type="entry name" value="PyrdxlP-dep_Trfase_small"/>
</dbReference>
<dbReference type="NCBIfam" id="NF003764">
    <property type="entry name" value="PRK05355.1"/>
    <property type="match status" value="1"/>
</dbReference>
<dbReference type="NCBIfam" id="TIGR01364">
    <property type="entry name" value="serC_1"/>
    <property type="match status" value="1"/>
</dbReference>
<dbReference type="PANTHER" id="PTHR43247">
    <property type="entry name" value="PHOSPHOSERINE AMINOTRANSFERASE"/>
    <property type="match status" value="1"/>
</dbReference>
<dbReference type="PANTHER" id="PTHR43247:SF1">
    <property type="entry name" value="PHOSPHOSERINE AMINOTRANSFERASE"/>
    <property type="match status" value="1"/>
</dbReference>
<dbReference type="Pfam" id="PF00266">
    <property type="entry name" value="Aminotran_5"/>
    <property type="match status" value="1"/>
</dbReference>
<dbReference type="PIRSF" id="PIRSF000525">
    <property type="entry name" value="SerC"/>
    <property type="match status" value="1"/>
</dbReference>
<dbReference type="SUPFAM" id="SSF53383">
    <property type="entry name" value="PLP-dependent transferases"/>
    <property type="match status" value="1"/>
</dbReference>
<dbReference type="PROSITE" id="PS00595">
    <property type="entry name" value="AA_TRANSFER_CLASS_5"/>
    <property type="match status" value="1"/>
</dbReference>
<evidence type="ECO:0000255" key="1">
    <source>
        <dbReference type="HAMAP-Rule" id="MF_00160"/>
    </source>
</evidence>
<proteinExistence type="inferred from homology"/>
<gene>
    <name evidence="1" type="primary">serC</name>
    <name type="ordered locus">YPDSF_2306</name>
</gene>
<sequence length="361" mass="40199">MTQVYNFSAGPAMLPVEVLRRAEQELRNWHGLGTSVMEISHRSKEFMQVAEESEKDLRDLLQIPANYKVLFCHGGARAQFAAVPLNLLGDRNSADYIDGGYWAHSAIKEAQKYCTPNVIDVTTHDNGLTGIQPMKQWKLSDNAAYVHYCPNETIDGVAINEQPDFGNKVVVADYSSSILSRPIDISRYGVIYAGAQKNIGPAGLTLVIVREDLLGKAHTALPSILDYKVLADNDSMFNTPPTFAWYLSGLVFKWLKEQGGLCEMEKRNQAKAELLYGAIDRTGFYRNQVAITNRSWMNVPFQMADASLDKLFLREAEAQGLQALKGHRVAGGMRASIYNAMPIEGVKALTDFMADFERRHG</sequence>